<accession>P0ADW7</accession>
<accession>P45476</accession>
<organism>
    <name type="scientific">Escherichia coli O157:H7</name>
    <dbReference type="NCBI Taxonomy" id="83334"/>
    <lineage>
        <taxon>Bacteria</taxon>
        <taxon>Pseudomonadati</taxon>
        <taxon>Pseudomonadota</taxon>
        <taxon>Gammaproteobacteria</taxon>
        <taxon>Enterobacterales</taxon>
        <taxon>Enterobacteriaceae</taxon>
        <taxon>Escherichia</taxon>
    </lineage>
</organism>
<name>YHCC_ECO57</name>
<sequence>MQLQKLVNMFGGDLTRRYGQKVHKLTLHGGFSCPNRDGTIGRGGCTFCNVASFADEAQQHRSIAEQLAHQANLVNRAKRYLAYFQAYTSTFAEVQVLRSMYQQAVSQANIVGLCVGTRPDCVPDAVLDLLCEYKDQGYEVWLELGLQTAHDKTLHRINRGHDFACYQRTTQLARQRGLKVCSHLIVGLPGEGQAECLQTLERVVETGVDGIKLHPLHIVKGSIMAKAWEAGRLNGIELEDYTLTAGEMIRHTPPEVIYHRISASARRPTLLAPLWCENRWTGMVELDRYLNEHGVQGSALGRPWLPPTE</sequence>
<keyword id="KW-0004">4Fe-4S</keyword>
<keyword id="KW-0408">Iron</keyword>
<keyword id="KW-0411">Iron-sulfur</keyword>
<keyword id="KW-0479">Metal-binding</keyword>
<keyword id="KW-1185">Reference proteome</keyword>
<keyword id="KW-0949">S-adenosyl-L-methionine</keyword>
<evidence type="ECO:0000250" key="1">
    <source>
        <dbReference type="UniProtKB" id="Q9X0Z6"/>
    </source>
</evidence>
<evidence type="ECO:0000255" key="2">
    <source>
        <dbReference type="PROSITE-ProRule" id="PRU01266"/>
    </source>
</evidence>
<evidence type="ECO:0000305" key="3"/>
<dbReference type="EMBL" id="AE005174">
    <property type="protein sequence ID" value="AAG58345.1"/>
    <property type="molecule type" value="Genomic_DNA"/>
</dbReference>
<dbReference type="EMBL" id="BA000007">
    <property type="protein sequence ID" value="BAB37513.1"/>
    <property type="molecule type" value="Genomic_DNA"/>
</dbReference>
<dbReference type="PIR" id="B91140">
    <property type="entry name" value="B91140"/>
</dbReference>
<dbReference type="PIR" id="E85985">
    <property type="entry name" value="E85985"/>
</dbReference>
<dbReference type="RefSeq" id="NP_312117.1">
    <property type="nucleotide sequence ID" value="NC_002695.1"/>
</dbReference>
<dbReference type="RefSeq" id="WP_001299745.1">
    <property type="nucleotide sequence ID" value="NZ_VOAI01000014.1"/>
</dbReference>
<dbReference type="SMR" id="P0ADW7"/>
<dbReference type="STRING" id="155864.Z4575"/>
<dbReference type="GeneID" id="916061"/>
<dbReference type="KEGG" id="ece:Z4575"/>
<dbReference type="KEGG" id="ecs:ECs_4090"/>
<dbReference type="PATRIC" id="fig|386585.9.peg.4269"/>
<dbReference type="eggNOG" id="COG1242">
    <property type="taxonomic scope" value="Bacteria"/>
</dbReference>
<dbReference type="HOGENOM" id="CLU_060920_0_0_6"/>
<dbReference type="OMA" id="NAGFTCP"/>
<dbReference type="Proteomes" id="UP000000558">
    <property type="component" value="Chromosome"/>
</dbReference>
<dbReference type="Proteomes" id="UP000002519">
    <property type="component" value="Chromosome"/>
</dbReference>
<dbReference type="GO" id="GO:0051539">
    <property type="term" value="F:4 iron, 4 sulfur cluster binding"/>
    <property type="evidence" value="ECO:0007669"/>
    <property type="project" value="UniProtKB-KW"/>
</dbReference>
<dbReference type="GO" id="GO:0003824">
    <property type="term" value="F:catalytic activity"/>
    <property type="evidence" value="ECO:0007669"/>
    <property type="project" value="InterPro"/>
</dbReference>
<dbReference type="GO" id="GO:0046872">
    <property type="term" value="F:metal ion binding"/>
    <property type="evidence" value="ECO:0007669"/>
    <property type="project" value="UniProtKB-KW"/>
</dbReference>
<dbReference type="CDD" id="cd01335">
    <property type="entry name" value="Radical_SAM"/>
    <property type="match status" value="1"/>
</dbReference>
<dbReference type="FunFam" id="3.80.30.20:FF:000004">
    <property type="entry name" value="Radical SAM protein family"/>
    <property type="match status" value="1"/>
</dbReference>
<dbReference type="Gene3D" id="3.80.30.20">
    <property type="entry name" value="tm_1862 like domain"/>
    <property type="match status" value="1"/>
</dbReference>
<dbReference type="InterPro" id="IPR039661">
    <property type="entry name" value="ELP3"/>
</dbReference>
<dbReference type="InterPro" id="IPR006638">
    <property type="entry name" value="Elp3/MiaA/NifB-like_rSAM"/>
</dbReference>
<dbReference type="InterPro" id="IPR032432">
    <property type="entry name" value="Radical_SAM_C"/>
</dbReference>
<dbReference type="InterPro" id="IPR007197">
    <property type="entry name" value="rSAM"/>
</dbReference>
<dbReference type="InterPro" id="IPR023404">
    <property type="entry name" value="rSAM_horseshoe"/>
</dbReference>
<dbReference type="InterPro" id="IPR005911">
    <property type="entry name" value="YhcC-like"/>
</dbReference>
<dbReference type="NCBIfam" id="TIGR01212">
    <property type="entry name" value="TIGR01212 family radical SAM protein"/>
    <property type="match status" value="1"/>
</dbReference>
<dbReference type="PANTHER" id="PTHR11135">
    <property type="entry name" value="HISTONE ACETYLTRANSFERASE-RELATED"/>
    <property type="match status" value="1"/>
</dbReference>
<dbReference type="PANTHER" id="PTHR11135:SF1">
    <property type="entry name" value="PROTEIN YHCC"/>
    <property type="match status" value="1"/>
</dbReference>
<dbReference type="Pfam" id="PF04055">
    <property type="entry name" value="Radical_SAM"/>
    <property type="match status" value="1"/>
</dbReference>
<dbReference type="Pfam" id="PF16199">
    <property type="entry name" value="Radical_SAM_C"/>
    <property type="match status" value="1"/>
</dbReference>
<dbReference type="SFLD" id="SFLDG01086">
    <property type="entry name" value="elongater_protein-like"/>
    <property type="match status" value="1"/>
</dbReference>
<dbReference type="SFLD" id="SFLDS00029">
    <property type="entry name" value="Radical_SAM"/>
    <property type="match status" value="1"/>
</dbReference>
<dbReference type="SFLD" id="SFLDG01091">
    <property type="entry name" value="uncharacterized_CHP01210-like"/>
    <property type="match status" value="1"/>
</dbReference>
<dbReference type="SMART" id="SM00729">
    <property type="entry name" value="Elp3"/>
    <property type="match status" value="1"/>
</dbReference>
<dbReference type="SUPFAM" id="SSF102114">
    <property type="entry name" value="Radical SAM enzymes"/>
    <property type="match status" value="1"/>
</dbReference>
<dbReference type="PROSITE" id="PS51918">
    <property type="entry name" value="RADICAL_SAM"/>
    <property type="match status" value="1"/>
</dbReference>
<proteinExistence type="inferred from homology"/>
<protein>
    <recommendedName>
        <fullName evidence="3">Uncharacterized protein YhcC</fullName>
    </recommendedName>
</protein>
<feature type="chain" id="PRO_0000169482" description="Uncharacterized protein YhcC">
    <location>
        <begin position="1"/>
        <end position="309"/>
    </location>
</feature>
<feature type="domain" description="Radical SAM core" evidence="2">
    <location>
        <begin position="17"/>
        <end position="254"/>
    </location>
</feature>
<feature type="binding site" evidence="1">
    <location>
        <position position="33"/>
    </location>
    <ligand>
        <name>[4Fe-4S] cluster</name>
        <dbReference type="ChEBI" id="CHEBI:49883"/>
        <note>4Fe-4S-S-AdoMet</note>
    </ligand>
</feature>
<feature type="binding site" evidence="1">
    <location>
        <position position="45"/>
    </location>
    <ligand>
        <name>[4Fe-4S] cluster</name>
        <dbReference type="ChEBI" id="CHEBI:49883"/>
        <note>4Fe-4S-S-AdoMet</note>
    </ligand>
</feature>
<feature type="binding site" evidence="1">
    <location>
        <position position="48"/>
    </location>
    <ligand>
        <name>[4Fe-4S] cluster</name>
        <dbReference type="ChEBI" id="CHEBI:49883"/>
        <note>4Fe-4S-S-AdoMet</note>
    </ligand>
</feature>
<reference key="1">
    <citation type="journal article" date="2001" name="Nature">
        <title>Genome sequence of enterohaemorrhagic Escherichia coli O157:H7.</title>
        <authorList>
            <person name="Perna N.T."/>
            <person name="Plunkett G. III"/>
            <person name="Burland V."/>
            <person name="Mau B."/>
            <person name="Glasner J.D."/>
            <person name="Rose D.J."/>
            <person name="Mayhew G.F."/>
            <person name="Evans P.S."/>
            <person name="Gregor J."/>
            <person name="Kirkpatrick H.A."/>
            <person name="Posfai G."/>
            <person name="Hackett J."/>
            <person name="Klink S."/>
            <person name="Boutin A."/>
            <person name="Shao Y."/>
            <person name="Miller L."/>
            <person name="Grotbeck E.J."/>
            <person name="Davis N.W."/>
            <person name="Lim A."/>
            <person name="Dimalanta E.T."/>
            <person name="Potamousis K."/>
            <person name="Apodaca J."/>
            <person name="Anantharaman T.S."/>
            <person name="Lin J."/>
            <person name="Yen G."/>
            <person name="Schwartz D.C."/>
            <person name="Welch R.A."/>
            <person name="Blattner F.R."/>
        </authorList>
    </citation>
    <scope>NUCLEOTIDE SEQUENCE [LARGE SCALE GENOMIC DNA]</scope>
    <source>
        <strain>O157:H7 / EDL933 / ATCC 700927 / EHEC</strain>
    </source>
</reference>
<reference key="2">
    <citation type="journal article" date="2001" name="DNA Res.">
        <title>Complete genome sequence of enterohemorrhagic Escherichia coli O157:H7 and genomic comparison with a laboratory strain K-12.</title>
        <authorList>
            <person name="Hayashi T."/>
            <person name="Makino K."/>
            <person name="Ohnishi M."/>
            <person name="Kurokawa K."/>
            <person name="Ishii K."/>
            <person name="Yokoyama K."/>
            <person name="Han C.-G."/>
            <person name="Ohtsubo E."/>
            <person name="Nakayama K."/>
            <person name="Murata T."/>
            <person name="Tanaka M."/>
            <person name="Tobe T."/>
            <person name="Iida T."/>
            <person name="Takami H."/>
            <person name="Honda T."/>
            <person name="Sasakawa C."/>
            <person name="Ogasawara N."/>
            <person name="Yasunaga T."/>
            <person name="Kuhara S."/>
            <person name="Shiba T."/>
            <person name="Hattori M."/>
            <person name="Shinagawa H."/>
        </authorList>
    </citation>
    <scope>NUCLEOTIDE SEQUENCE [LARGE SCALE GENOMIC DNA]</scope>
    <source>
        <strain>O157:H7 / Sakai / RIMD 0509952 / EHEC</strain>
    </source>
</reference>
<gene>
    <name type="primary">yhcC</name>
    <name type="ordered locus">Z4575</name>
    <name type="ordered locus">ECs4090</name>
</gene>
<comment type="cofactor">
    <cofactor evidence="1">
        <name>[4Fe-4S] cluster</name>
        <dbReference type="ChEBI" id="CHEBI:49883"/>
    </cofactor>
    <text evidence="1">Binds 1 [4Fe-4S] cluster. The cluster is coordinated with 3 cysteines and an exchangeable S-adenosyl-L-methionine.</text>
</comment>
<comment type="similarity">
    <text evidence="3">Belongs to the radical SAM superfamily.</text>
</comment>